<reference key="1">
    <citation type="journal article" date="2002" name="Planta">
        <title>MADS-box gene expression in lateral primordia, meristems and differentiated tissues of Arabidopsis thaliana roots.</title>
        <authorList>
            <person name="Burgeff C."/>
            <person name="Liljegren S.J."/>
            <person name="Tapia-Lopez R."/>
            <person name="Yanofsky M.F."/>
            <person name="Alvarez-Buylla E.R."/>
        </authorList>
    </citation>
    <scope>NUCLEOTIDE SEQUENCE [MRNA]</scope>
    <scope>DEVELOPMENTAL STAGE</scope>
    <scope>TISSUE SPECIFICITY</scope>
    <source>
        <strain>cv. Columbia</strain>
        <tissue>Root</tissue>
    </source>
</reference>
<reference key="2">
    <citation type="journal article" date="1999" name="Nature">
        <title>Sequence and analysis of chromosome 4 of the plant Arabidopsis thaliana.</title>
        <authorList>
            <person name="Mayer K.F.X."/>
            <person name="Schueller C."/>
            <person name="Wambutt R."/>
            <person name="Murphy G."/>
            <person name="Volckaert G."/>
            <person name="Pohl T."/>
            <person name="Duesterhoeft A."/>
            <person name="Stiekema W."/>
            <person name="Entian K.-D."/>
            <person name="Terryn N."/>
            <person name="Harris B."/>
            <person name="Ansorge W."/>
            <person name="Brandt P."/>
            <person name="Grivell L.A."/>
            <person name="Rieger M."/>
            <person name="Weichselgartner M."/>
            <person name="de Simone V."/>
            <person name="Obermaier B."/>
            <person name="Mache R."/>
            <person name="Mueller M."/>
            <person name="Kreis M."/>
            <person name="Delseny M."/>
            <person name="Puigdomenech P."/>
            <person name="Watson M."/>
            <person name="Schmidtheini T."/>
            <person name="Reichert B."/>
            <person name="Portetelle D."/>
            <person name="Perez-Alonso M."/>
            <person name="Boutry M."/>
            <person name="Bancroft I."/>
            <person name="Vos P."/>
            <person name="Hoheisel J."/>
            <person name="Zimmermann W."/>
            <person name="Wedler H."/>
            <person name="Ridley P."/>
            <person name="Langham S.-A."/>
            <person name="McCullagh B."/>
            <person name="Bilham L."/>
            <person name="Robben J."/>
            <person name="van der Schueren J."/>
            <person name="Grymonprez B."/>
            <person name="Chuang Y.-J."/>
            <person name="Vandenbussche F."/>
            <person name="Braeken M."/>
            <person name="Weltjens I."/>
            <person name="Voet M."/>
            <person name="Bastiaens I."/>
            <person name="Aert R."/>
            <person name="Defoor E."/>
            <person name="Weitzenegger T."/>
            <person name="Bothe G."/>
            <person name="Ramsperger U."/>
            <person name="Hilbert H."/>
            <person name="Braun M."/>
            <person name="Holzer E."/>
            <person name="Brandt A."/>
            <person name="Peters S."/>
            <person name="van Staveren M."/>
            <person name="Dirkse W."/>
            <person name="Mooijman P."/>
            <person name="Klein Lankhorst R."/>
            <person name="Rose M."/>
            <person name="Hauf J."/>
            <person name="Koetter P."/>
            <person name="Berneiser S."/>
            <person name="Hempel S."/>
            <person name="Feldpausch M."/>
            <person name="Lamberth S."/>
            <person name="Van den Daele H."/>
            <person name="De Keyser A."/>
            <person name="Buysshaert C."/>
            <person name="Gielen J."/>
            <person name="Villarroel R."/>
            <person name="De Clercq R."/>
            <person name="van Montagu M."/>
            <person name="Rogers J."/>
            <person name="Cronin A."/>
            <person name="Quail M.A."/>
            <person name="Bray-Allen S."/>
            <person name="Clark L."/>
            <person name="Doggett J."/>
            <person name="Hall S."/>
            <person name="Kay M."/>
            <person name="Lennard N."/>
            <person name="McLay K."/>
            <person name="Mayes R."/>
            <person name="Pettett A."/>
            <person name="Rajandream M.A."/>
            <person name="Lyne M."/>
            <person name="Benes V."/>
            <person name="Rechmann S."/>
            <person name="Borkova D."/>
            <person name="Bloecker H."/>
            <person name="Scharfe M."/>
            <person name="Grimm M."/>
            <person name="Loehnert T.-H."/>
            <person name="Dose S."/>
            <person name="de Haan M."/>
            <person name="Maarse A.C."/>
            <person name="Schaefer M."/>
            <person name="Mueller-Auer S."/>
            <person name="Gabel C."/>
            <person name="Fuchs M."/>
            <person name="Fartmann B."/>
            <person name="Granderath K."/>
            <person name="Dauner D."/>
            <person name="Herzl A."/>
            <person name="Neumann S."/>
            <person name="Argiriou A."/>
            <person name="Vitale D."/>
            <person name="Liguori R."/>
            <person name="Piravandi E."/>
            <person name="Massenet O."/>
            <person name="Quigley F."/>
            <person name="Clabauld G."/>
            <person name="Muendlein A."/>
            <person name="Felber R."/>
            <person name="Schnabl S."/>
            <person name="Hiller R."/>
            <person name="Schmidt W."/>
            <person name="Lecharny A."/>
            <person name="Aubourg S."/>
            <person name="Chefdor F."/>
            <person name="Cooke R."/>
            <person name="Berger C."/>
            <person name="Monfort A."/>
            <person name="Casacuberta E."/>
            <person name="Gibbons T."/>
            <person name="Weber N."/>
            <person name="Vandenbol M."/>
            <person name="Bargues M."/>
            <person name="Terol J."/>
            <person name="Torres A."/>
            <person name="Perez-Perez A."/>
            <person name="Purnelle B."/>
            <person name="Bent E."/>
            <person name="Johnson S."/>
            <person name="Tacon D."/>
            <person name="Jesse T."/>
            <person name="Heijnen L."/>
            <person name="Schwarz S."/>
            <person name="Scholler P."/>
            <person name="Heber S."/>
            <person name="Francs P."/>
            <person name="Bielke C."/>
            <person name="Frishman D."/>
            <person name="Haase D."/>
            <person name="Lemcke K."/>
            <person name="Mewes H.-W."/>
            <person name="Stocker S."/>
            <person name="Zaccaria P."/>
            <person name="Bevan M."/>
            <person name="Wilson R.K."/>
            <person name="de la Bastide M."/>
            <person name="Habermann K."/>
            <person name="Parnell L."/>
            <person name="Dedhia N."/>
            <person name="Gnoj L."/>
            <person name="Schutz K."/>
            <person name="Huang E."/>
            <person name="Spiegel L."/>
            <person name="Sekhon M."/>
            <person name="Murray J."/>
            <person name="Sheet P."/>
            <person name="Cordes M."/>
            <person name="Abu-Threideh J."/>
            <person name="Stoneking T."/>
            <person name="Kalicki J."/>
            <person name="Graves T."/>
            <person name="Harmon G."/>
            <person name="Edwards J."/>
            <person name="Latreille P."/>
            <person name="Courtney L."/>
            <person name="Cloud J."/>
            <person name="Abbott A."/>
            <person name="Scott K."/>
            <person name="Johnson D."/>
            <person name="Minx P."/>
            <person name="Bentley D."/>
            <person name="Fulton B."/>
            <person name="Miller N."/>
            <person name="Greco T."/>
            <person name="Kemp K."/>
            <person name="Kramer J."/>
            <person name="Fulton L."/>
            <person name="Mardis E."/>
            <person name="Dante M."/>
            <person name="Pepin K."/>
            <person name="Hillier L.W."/>
            <person name="Nelson J."/>
            <person name="Spieth J."/>
            <person name="Ryan E."/>
            <person name="Andrews S."/>
            <person name="Geisel C."/>
            <person name="Layman D."/>
            <person name="Du H."/>
            <person name="Ali J."/>
            <person name="Berghoff A."/>
            <person name="Jones K."/>
            <person name="Drone K."/>
            <person name="Cotton M."/>
            <person name="Joshu C."/>
            <person name="Antonoiu B."/>
            <person name="Zidanic M."/>
            <person name="Strong C."/>
            <person name="Sun H."/>
            <person name="Lamar B."/>
            <person name="Yordan C."/>
            <person name="Ma P."/>
            <person name="Zhong J."/>
            <person name="Preston R."/>
            <person name="Vil D."/>
            <person name="Shekher M."/>
            <person name="Matero A."/>
            <person name="Shah R."/>
            <person name="Swaby I.K."/>
            <person name="O'Shaughnessy A."/>
            <person name="Rodriguez M."/>
            <person name="Hoffman J."/>
            <person name="Till S."/>
            <person name="Granat S."/>
            <person name="Shohdy N."/>
            <person name="Hasegawa A."/>
            <person name="Hameed A."/>
            <person name="Lodhi M."/>
            <person name="Johnson A."/>
            <person name="Chen E."/>
            <person name="Marra M.A."/>
            <person name="Martienssen R."/>
            <person name="McCombie W.R."/>
        </authorList>
    </citation>
    <scope>NUCLEOTIDE SEQUENCE [LARGE SCALE GENOMIC DNA]</scope>
    <source>
        <strain>cv. Columbia</strain>
    </source>
</reference>
<reference key="3">
    <citation type="journal article" date="2017" name="Plant J.">
        <title>Araport11: a complete reannotation of the Arabidopsis thaliana reference genome.</title>
        <authorList>
            <person name="Cheng C.Y."/>
            <person name="Krishnakumar V."/>
            <person name="Chan A.P."/>
            <person name="Thibaud-Nissen F."/>
            <person name="Schobel S."/>
            <person name="Town C.D."/>
        </authorList>
    </citation>
    <scope>GENOME REANNOTATION</scope>
    <source>
        <strain>cv. Columbia</strain>
    </source>
</reference>
<reference key="4">
    <citation type="journal article" date="2005" name="Plant Cell">
        <title>Comprehensive interaction map of the Arabidopsis MADS Box transcription factors.</title>
        <authorList>
            <person name="de Folter S."/>
            <person name="Immink R.G.H."/>
            <person name="Kieffer M."/>
            <person name="Parenicova L."/>
            <person name="Henz S.R."/>
            <person name="Weigel D."/>
            <person name="Busscher M."/>
            <person name="Kooiker M."/>
            <person name="Colombo L."/>
            <person name="Kater M.M."/>
            <person name="Davies B."/>
            <person name="Angenent G.C."/>
        </authorList>
    </citation>
    <scope>INTERACTION WITH AGL15; AGL16 AND AGL19</scope>
</reference>
<reference key="5">
    <citation type="journal article" date="2011" name="Curr. Biol.">
        <title>An essential protein that interacts with endosomes and promotes movement of the SHORT-ROOT transcription factor.</title>
        <authorList>
            <person name="Koizumi K."/>
            <person name="Wu S."/>
            <person name="MacRae-Crerar A."/>
            <person name="Gallagher K.L."/>
        </authorList>
    </citation>
    <scope>INTERACTION WITH SIEL</scope>
</reference>
<feature type="chain" id="PRO_0000199479" description="Agamous-like MADS-box protein AGL21">
    <location>
        <begin position="1"/>
        <end position="228"/>
    </location>
</feature>
<feature type="domain" description="MADS-box" evidence="1">
    <location>
        <begin position="3"/>
        <end position="57"/>
    </location>
</feature>
<feature type="domain" description="K-box" evidence="2">
    <location>
        <begin position="86"/>
        <end position="176"/>
    </location>
</feature>
<proteinExistence type="evidence at protein level"/>
<protein>
    <recommendedName>
        <fullName>Agamous-like MADS-box protein AGL21</fullName>
    </recommendedName>
</protein>
<dbReference type="EMBL" id="AF336979">
    <property type="protein sequence ID" value="AAL73213.1"/>
    <property type="molecule type" value="mRNA"/>
</dbReference>
<dbReference type="EMBL" id="AL035538">
    <property type="protein sequence ID" value="CAB37534.1"/>
    <property type="molecule type" value="Genomic_DNA"/>
</dbReference>
<dbReference type="EMBL" id="AL161592">
    <property type="protein sequence ID" value="CAB80459.1"/>
    <property type="molecule type" value="Genomic_DNA"/>
</dbReference>
<dbReference type="EMBL" id="CP002687">
    <property type="protein sequence ID" value="AEE86856.1"/>
    <property type="molecule type" value="Genomic_DNA"/>
</dbReference>
<dbReference type="PIR" id="T05621">
    <property type="entry name" value="T05621"/>
</dbReference>
<dbReference type="RefSeq" id="NP_195507.1">
    <property type="nucleotide sequence ID" value="NM_119955.3"/>
</dbReference>
<dbReference type="SMR" id="Q9SZJ6"/>
<dbReference type="BioGRID" id="15231">
    <property type="interactions" value="41"/>
</dbReference>
<dbReference type="FunCoup" id="Q9SZJ6">
    <property type="interactions" value="25"/>
</dbReference>
<dbReference type="IntAct" id="Q9SZJ6">
    <property type="interactions" value="41"/>
</dbReference>
<dbReference type="STRING" id="3702.Q9SZJ6"/>
<dbReference type="PaxDb" id="3702-AT4G37940.1"/>
<dbReference type="ProteomicsDB" id="244688"/>
<dbReference type="EnsemblPlants" id="AT4G37940.1">
    <property type="protein sequence ID" value="AT4G37940.1"/>
    <property type="gene ID" value="AT4G37940"/>
</dbReference>
<dbReference type="GeneID" id="829950"/>
<dbReference type="Gramene" id="AT4G37940.1">
    <property type="protein sequence ID" value="AT4G37940.1"/>
    <property type="gene ID" value="AT4G37940"/>
</dbReference>
<dbReference type="KEGG" id="ath:AT4G37940"/>
<dbReference type="Araport" id="AT4G37940"/>
<dbReference type="TAIR" id="AT4G37940">
    <property type="gene designation" value="AGL21"/>
</dbReference>
<dbReference type="eggNOG" id="KOG0014">
    <property type="taxonomic scope" value="Eukaryota"/>
</dbReference>
<dbReference type="HOGENOM" id="CLU_053053_2_0_1"/>
<dbReference type="InParanoid" id="Q9SZJ6"/>
<dbReference type="OMA" id="RVNAENC"/>
<dbReference type="OrthoDB" id="1898716at2759"/>
<dbReference type="PhylomeDB" id="Q9SZJ6"/>
<dbReference type="PRO" id="PR:Q9SZJ6"/>
<dbReference type="Proteomes" id="UP000006548">
    <property type="component" value="Chromosome 4"/>
</dbReference>
<dbReference type="ExpressionAtlas" id="Q9SZJ6">
    <property type="expression patterns" value="baseline and differential"/>
</dbReference>
<dbReference type="GO" id="GO:0005634">
    <property type="term" value="C:nucleus"/>
    <property type="evidence" value="ECO:0000314"/>
    <property type="project" value="TAIR"/>
</dbReference>
<dbReference type="GO" id="GO:0003700">
    <property type="term" value="F:DNA-binding transcription factor activity"/>
    <property type="evidence" value="ECO:0000250"/>
    <property type="project" value="TAIR"/>
</dbReference>
<dbReference type="GO" id="GO:0046983">
    <property type="term" value="F:protein dimerization activity"/>
    <property type="evidence" value="ECO:0007669"/>
    <property type="project" value="InterPro"/>
</dbReference>
<dbReference type="GO" id="GO:0000977">
    <property type="term" value="F:RNA polymerase II transcription regulatory region sequence-specific DNA binding"/>
    <property type="evidence" value="ECO:0007669"/>
    <property type="project" value="InterPro"/>
</dbReference>
<dbReference type="GO" id="GO:0045944">
    <property type="term" value="P:positive regulation of transcription by RNA polymerase II"/>
    <property type="evidence" value="ECO:0007669"/>
    <property type="project" value="InterPro"/>
</dbReference>
<dbReference type="CDD" id="cd00265">
    <property type="entry name" value="MADS_MEF2_like"/>
    <property type="match status" value="1"/>
</dbReference>
<dbReference type="FunFam" id="3.40.1810.10:FF:000021">
    <property type="entry name" value="AGAMOUS-like 21"/>
    <property type="match status" value="1"/>
</dbReference>
<dbReference type="Gene3D" id="3.40.1810.10">
    <property type="entry name" value="Transcription factor, MADS-box"/>
    <property type="match status" value="1"/>
</dbReference>
<dbReference type="InterPro" id="IPR050142">
    <property type="entry name" value="MADS-box/MEF2_TF"/>
</dbReference>
<dbReference type="InterPro" id="IPR033896">
    <property type="entry name" value="MEF2-like_N"/>
</dbReference>
<dbReference type="InterPro" id="IPR002487">
    <property type="entry name" value="TF_Kbox"/>
</dbReference>
<dbReference type="InterPro" id="IPR002100">
    <property type="entry name" value="TF_MADSbox"/>
</dbReference>
<dbReference type="InterPro" id="IPR036879">
    <property type="entry name" value="TF_MADSbox_sf"/>
</dbReference>
<dbReference type="PANTHER" id="PTHR48019">
    <property type="entry name" value="SERUM RESPONSE FACTOR HOMOLOG"/>
    <property type="match status" value="1"/>
</dbReference>
<dbReference type="Pfam" id="PF01486">
    <property type="entry name" value="K-box"/>
    <property type="match status" value="1"/>
</dbReference>
<dbReference type="Pfam" id="PF00319">
    <property type="entry name" value="SRF-TF"/>
    <property type="match status" value="1"/>
</dbReference>
<dbReference type="PRINTS" id="PR00404">
    <property type="entry name" value="MADSDOMAIN"/>
</dbReference>
<dbReference type="SMART" id="SM00432">
    <property type="entry name" value="MADS"/>
    <property type="match status" value="1"/>
</dbReference>
<dbReference type="SUPFAM" id="SSF55455">
    <property type="entry name" value="SRF-like"/>
    <property type="match status" value="1"/>
</dbReference>
<dbReference type="PROSITE" id="PS51297">
    <property type="entry name" value="K_BOX"/>
    <property type="match status" value="1"/>
</dbReference>
<dbReference type="PROSITE" id="PS00350">
    <property type="entry name" value="MADS_BOX_1"/>
    <property type="match status" value="1"/>
</dbReference>
<dbReference type="PROSITE" id="PS50066">
    <property type="entry name" value="MADS_BOX_2"/>
    <property type="match status" value="1"/>
</dbReference>
<comment type="function">
    <text>Probable transcription factor.</text>
</comment>
<comment type="subunit">
    <text evidence="4 5">Interacts with AGL15, AGL16 and AGL19 (PubMed:15805477). Interacts with SIEL (PubMed:21924907).</text>
</comment>
<comment type="interaction">
    <interactant intactId="EBI-621986">
        <id>Q9SZJ6</id>
    </interactant>
    <interactant intactId="EBI-592304">
        <id>P29381</id>
        <label>AGL1</label>
    </interactant>
    <organismsDiffer>false</organismsDiffer>
    <experiments>4</experiments>
</comment>
<comment type="interaction">
    <interactant intactId="EBI-621986">
        <id>Q9SZJ6</id>
    </interactant>
    <interactant intactId="EBI-621976">
        <id>Q38841</id>
        <label>AGL12</label>
    </interactant>
    <organismsDiffer>false</organismsDiffer>
    <experiments>4</experiments>
</comment>
<comment type="interaction">
    <interactant intactId="EBI-621986">
        <id>Q9SZJ6</id>
    </interactant>
    <interactant intactId="EBI-622076">
        <id>Q38847</id>
        <label>AGL15</label>
    </interactant>
    <organismsDiffer>false</organismsDiffer>
    <experiments>5</experiments>
</comment>
<comment type="interaction">
    <interactant intactId="EBI-621986">
        <id>Q9SZJ6</id>
    </interactant>
    <interactant intactId="EBI-621930">
        <id>A2RVQ5</id>
        <label>AGL16</label>
    </interactant>
    <organismsDiffer>false</organismsDiffer>
    <experiments>5</experiments>
</comment>
<comment type="interaction">
    <interactant intactId="EBI-621986">
        <id>Q9SZJ6</id>
    </interactant>
    <interactant intactId="EBI-622087">
        <id>Q38840</id>
        <label>AGL17</label>
    </interactant>
    <organismsDiffer>false</organismsDiffer>
    <experiments>4</experiments>
</comment>
<comment type="interaction">
    <interactant intactId="EBI-621986">
        <id>Q9SZJ6</id>
    </interactant>
    <interactant intactId="EBI-592083">
        <id>O82794</id>
        <label>AGL24</label>
    </interactant>
    <organismsDiffer>false</organismsDiffer>
    <experiments>4</experiments>
</comment>
<comment type="interaction">
    <interactant intactId="EBI-621986">
        <id>Q9SZJ6</id>
    </interactant>
    <interactant intactId="EBI-622017">
        <id>Q9FIS1</id>
        <label>AGL42</label>
    </interactant>
    <organismsDiffer>false</organismsDiffer>
    <experiments>4</experiments>
</comment>
<comment type="interaction">
    <interactant intactId="EBI-621986">
        <id>Q9SZJ6</id>
    </interactant>
    <interactant intactId="EBI-621949">
        <id>P29385</id>
        <label>AGL5</label>
    </interactant>
    <organismsDiffer>false</organismsDiffer>
    <experiments>4</experiments>
</comment>
<comment type="interaction">
    <interactant intactId="EBI-621986">
        <id>Q9SZJ6</id>
    </interactant>
    <interactant intactId="EBI-622096">
        <id>Q9SI38</id>
        <label>ANR1</label>
    </interactant>
    <organismsDiffer>false</organismsDiffer>
    <experiments>4</experiments>
</comment>
<comment type="interaction">
    <interactant intactId="EBI-621986">
        <id>Q9SZJ6</id>
    </interactant>
    <interactant intactId="EBI-592003">
        <id>P35631</id>
        <label>AP1</label>
    </interactant>
    <organismsDiffer>false</organismsDiffer>
    <experiments>4</experiments>
</comment>
<comment type="interaction">
    <interactant intactId="EBI-621986">
        <id>Q9SZJ6</id>
    </interactant>
    <interactant intactId="EBI-15205450">
        <id>O80438</id>
        <label>MAK3</label>
    </interactant>
    <organismsDiffer>false</organismsDiffer>
    <experiments>3</experiments>
</comment>
<comment type="interaction">
    <interactant intactId="EBI-621986">
        <id>Q9SZJ6</id>
    </interactant>
    <interactant intactId="EBI-592058">
        <id>Q9FVC1</id>
        <label>SVP</label>
    </interactant>
    <organismsDiffer>false</organismsDiffer>
    <experiments>5</experiments>
</comment>
<comment type="interaction">
    <interactant intactId="EBI-621986">
        <id>Q9SZJ6</id>
    </interactant>
    <interactant intactId="EBI-15192325">
        <id>Q8LPR5</id>
        <label>TCP4</label>
    </interactant>
    <organismsDiffer>false</organismsDiffer>
    <experiments>3</experiments>
</comment>
<comment type="interaction">
    <interactant intactId="EBI-621986">
        <id>Q9SZJ6</id>
    </interactant>
    <interactant intactId="EBI-2367993">
        <id>Q9ZSI7</id>
        <label>WRKY47</label>
    </interactant>
    <organismsDiffer>false</organismsDiffer>
    <experiments>3</experiments>
</comment>
<comment type="subcellular location">
    <subcellularLocation>
        <location evidence="1">Nucleus</location>
    </subcellularLocation>
</comment>
<comment type="tissue specificity">
    <text evidence="3">Specifically expressed in root.</text>
</comment>
<comment type="developmental stage">
    <text evidence="3">Primarily expressed during lateral root formation and embryogenesis.</text>
</comment>
<evidence type="ECO:0000255" key="1">
    <source>
        <dbReference type="PROSITE-ProRule" id="PRU00251"/>
    </source>
</evidence>
<evidence type="ECO:0000255" key="2">
    <source>
        <dbReference type="PROSITE-ProRule" id="PRU00629"/>
    </source>
</evidence>
<evidence type="ECO:0000269" key="3">
    <source>
    </source>
</evidence>
<evidence type="ECO:0000269" key="4">
    <source>
    </source>
</evidence>
<evidence type="ECO:0000269" key="5">
    <source>
    </source>
</evidence>
<accession>Q9SZJ6</accession>
<accession>Q548I8</accession>
<keyword id="KW-0238">DNA-binding</keyword>
<keyword id="KW-0539">Nucleus</keyword>
<keyword id="KW-1185">Reference proteome</keyword>
<keyword id="KW-0804">Transcription</keyword>
<keyword id="KW-0805">Transcription regulation</keyword>
<gene>
    <name type="primary">AGL21</name>
    <name type="ordered locus">At4g37940</name>
    <name type="ORF">F20D10.60</name>
</gene>
<sequence>MGRGKIVIQRIDDSTSRQVTFSKRRKGLIKKAKELAILCDAEVGLIIFSSTGKLYDFASSSMKSVIDRYNKSKIEQQQLLNPASEVKFWQREAAVLRQELHALQENHRQMMGEQLNGLSVNELNSLENQIEISLRGIRMRKEQLLTQEIQELSQKRNLIHQENLDLSRKVQRIHQENVELYKKAYMANTNGFTHREVAVADDESHTQIRLQLSQPEHSDYDTPPRANE</sequence>
<name>AGL21_ARATH</name>
<organism>
    <name type="scientific">Arabidopsis thaliana</name>
    <name type="common">Mouse-ear cress</name>
    <dbReference type="NCBI Taxonomy" id="3702"/>
    <lineage>
        <taxon>Eukaryota</taxon>
        <taxon>Viridiplantae</taxon>
        <taxon>Streptophyta</taxon>
        <taxon>Embryophyta</taxon>
        <taxon>Tracheophyta</taxon>
        <taxon>Spermatophyta</taxon>
        <taxon>Magnoliopsida</taxon>
        <taxon>eudicotyledons</taxon>
        <taxon>Gunneridae</taxon>
        <taxon>Pentapetalae</taxon>
        <taxon>rosids</taxon>
        <taxon>malvids</taxon>
        <taxon>Brassicales</taxon>
        <taxon>Brassicaceae</taxon>
        <taxon>Camelineae</taxon>
        <taxon>Arabidopsis</taxon>
    </lineage>
</organism>